<reference key="1">
    <citation type="journal article" date="2003" name="Clin. Chem. Lab. Med.">
        <title>Molecular cloning, sequencing and functional expression of porcine thyrotropin (TSH) receptor cDNA.</title>
        <authorList>
            <person name="Igarashi M."/>
            <person name="Nagata A."/>
        </authorList>
    </citation>
    <scope>NUCLEOTIDE SEQUENCE [MRNA] (ISOFORM 1)</scope>
    <source>
        <tissue>Thyroid</tissue>
    </source>
</reference>
<reference key="2">
    <citation type="submission" date="2001-01" db="EMBL/GenBank/DDBJ databases">
        <title>Porcine thyroid stimulating hormone receptor (TSHR) mRNA variant.</title>
        <authorList>
            <person name="Melen L.B."/>
            <person name="McNamara E.M."/>
            <person name="Hennen G.P."/>
            <person name="Igout A."/>
        </authorList>
    </citation>
    <scope>NUCLEOTIDE SEQUENCE [MRNA] (ISOFORMS 1 AND 2)</scope>
    <source>
        <tissue>Thyroid</tissue>
    </source>
</reference>
<reference key="3">
    <citation type="journal article" date="2002" name="EMBO J.">
        <title>Tyrosine sulfation is required for agonist recognition by glycoprotein hormone receptors.</title>
        <authorList>
            <person name="Costagliola S."/>
            <person name="Panneels V."/>
            <person name="Bonomi M."/>
            <person name="Koch J."/>
            <person name="Many M.C."/>
            <person name="Smits G."/>
            <person name="Vassart G."/>
        </authorList>
    </citation>
    <scope>TISSUE SPECIFICITY</scope>
</reference>
<sequence length="764" mass="86644">MSLTPLLQLALLLALPRSLRGKGCPSPPCECHQEDDFRVTCKDIHSIPPLPPNTQTLKFIETHLKTIPSRAFSNLPNISRIYLSIDATLQQLESQSFYNLSKMTHIEIRNTRSLTYINPGALKDLPLLKFLGIFNTGLRIFPDLTKVYSTDVFFILEITDNPYMTSIPANAFQGLCNETLTLKLYNNGFTSVQGHAFNGTKLDAVYLNKNKYLTVIDKDAFGGVFSGPTLLDVSYTSVTALPPKGLEHLKELIARNTWTLKKLPLSLSFLHLTRADLSYPSHCCAFKNQKKIRGILESLMCNESSIRSLRQRKSVNAVNGPFYQEYEEDLGDSSVGNKENSKFQDTHSNSHYYVFFEEQEDEIIGFGQELKNPQEETLQAFDSHYDYTVCGGSEDMVCTPKSDEFNPCEDIMGYRFLRIVVWFVSLLALLGNVFVLVILLTSHYKLTVPRFLMCNLAFADFCMGMYLLLIASVDLYTQSEYYNHAIDWQTGPGCNTAGFFTVFASELSVYTLTVITLERWYAITFAMRLDRKIRLRHAYAIMAGGWVCCFLLALLPLVGISSYAKVSICLPMDTETPLALAYIILVLLLNIVAFTIVCSCYVKIYITVRNPQYNPGDKDTKIAKRMAVLIFTDFMCMAPISFYALSALMNKPLITVTNSKILLVLFYPLNSCANPFLYAIFTKAFQRDVFILLSKFGFCKRQAQAYRGQRVSPKNSTGIQVQKVTQNMRQSLPNMQDDYELLENSHLTHKKHDQISKEYKQPVL</sequence>
<keyword id="KW-0025">Alternative splicing</keyword>
<keyword id="KW-1003">Cell membrane</keyword>
<keyword id="KW-1015">Disulfide bond</keyword>
<keyword id="KW-0297">G-protein coupled receptor</keyword>
<keyword id="KW-0325">Glycoprotein</keyword>
<keyword id="KW-0433">Leucine-rich repeat</keyword>
<keyword id="KW-0472">Membrane</keyword>
<keyword id="KW-0675">Receptor</keyword>
<keyword id="KW-1185">Reference proteome</keyword>
<keyword id="KW-0677">Repeat</keyword>
<keyword id="KW-0732">Signal</keyword>
<keyword id="KW-0765">Sulfation</keyword>
<keyword id="KW-0807">Transducer</keyword>
<keyword id="KW-0812">Transmembrane</keyword>
<keyword id="KW-1133">Transmembrane helix</keyword>
<comment type="function">
    <text evidence="1 2">Receptor for the thyroid-stimulating hormone (TSH) or thyrotropin. Also acts as a receptor for the heterodimeric glycoprotein hormone (GPHA2:GPHB5) or thyrostimulin. The activity of this receptor is mediated by G proteins which activate adenylate cyclase. Plays a central role in controlling thyroid cell metabolism.</text>
</comment>
<comment type="subunit">
    <text evidence="1">Interacts with heterodimer GPHA2:GPHB5; this interaction stimulates cAMP production. Interacts (via the PDZ-binding motif) with SCRIB; regulates TSHR trafficking and function.</text>
</comment>
<comment type="subcellular location">
    <subcellularLocation>
        <location evidence="1">Cell membrane</location>
        <topology evidence="1">Multi-pass membrane protein</topology>
    </subcellularLocation>
    <subcellularLocation>
        <location evidence="1">Basolateral cell membrane</location>
        <topology evidence="1">Multi-pass membrane protein</topology>
    </subcellularLocation>
</comment>
<comment type="alternative products">
    <event type="alternative splicing"/>
    <isoform>
        <id>Q8SPP9-1</id>
        <name>1</name>
        <sequence type="displayed"/>
    </isoform>
    <isoform>
        <id>Q8SPP9-2</id>
        <name>2</name>
        <sequence type="described" ref="VSP_018131"/>
    </isoform>
</comment>
<comment type="tissue specificity">
    <text evidence="5">Expressed in thyroide cells (at protein level).</text>
</comment>
<comment type="PTM">
    <text evidence="1">Glycosylated.</text>
</comment>
<comment type="PTM">
    <text evidence="1">Sulfated. Sulfation on Tyr-385 plays a role in thyrotropin receptor binding and activation.</text>
</comment>
<comment type="similarity">
    <text evidence="4">Belongs to the G-protein coupled receptor 1 family. FSH/LSH/TSH subfamily.</text>
</comment>
<name>TSHR_PIG</name>
<proteinExistence type="evidence at protein level"/>
<dbReference type="EMBL" id="AY082015">
    <property type="protein sequence ID" value="AAL92560.1"/>
    <property type="molecule type" value="mRNA"/>
</dbReference>
<dbReference type="EMBL" id="AF338249">
    <property type="protein sequence ID" value="AAK08510.1"/>
    <property type="molecule type" value="mRNA"/>
</dbReference>
<dbReference type="EMBL" id="AF338250">
    <property type="protein sequence ID" value="AAK08511.1"/>
    <property type="molecule type" value="mRNA"/>
</dbReference>
<dbReference type="RefSeq" id="NP_999462.1">
    <property type="nucleotide sequence ID" value="NM_214297.1"/>
</dbReference>
<dbReference type="SMR" id="Q8SPP9"/>
<dbReference type="FunCoup" id="Q8SPP9">
    <property type="interactions" value="153"/>
</dbReference>
<dbReference type="STRING" id="9823.ENSSSCP00000053542"/>
<dbReference type="GlyCosmos" id="Q8SPP9">
    <property type="glycosylation" value="5 sites, No reported glycans"/>
</dbReference>
<dbReference type="GlyGen" id="Q8SPP9">
    <property type="glycosylation" value="5 sites"/>
</dbReference>
<dbReference type="PaxDb" id="9823-ENSSSCP00000027468"/>
<dbReference type="GeneID" id="397560"/>
<dbReference type="KEGG" id="ssc:397560"/>
<dbReference type="CTD" id="7253"/>
<dbReference type="eggNOG" id="KOG2087">
    <property type="taxonomic scope" value="Eukaryota"/>
</dbReference>
<dbReference type="InParanoid" id="Q8SPP9"/>
<dbReference type="OrthoDB" id="5981530at2759"/>
<dbReference type="Proteomes" id="UP000008227">
    <property type="component" value="Unplaced"/>
</dbReference>
<dbReference type="Proteomes" id="UP000314985">
    <property type="component" value="Unplaced"/>
</dbReference>
<dbReference type="Proteomes" id="UP000694570">
    <property type="component" value="Unplaced"/>
</dbReference>
<dbReference type="Proteomes" id="UP000694571">
    <property type="component" value="Unplaced"/>
</dbReference>
<dbReference type="Proteomes" id="UP000694720">
    <property type="component" value="Unplaced"/>
</dbReference>
<dbReference type="Proteomes" id="UP000694722">
    <property type="component" value="Unplaced"/>
</dbReference>
<dbReference type="Proteomes" id="UP000694723">
    <property type="component" value="Unplaced"/>
</dbReference>
<dbReference type="Proteomes" id="UP000694724">
    <property type="component" value="Unplaced"/>
</dbReference>
<dbReference type="Proteomes" id="UP000694725">
    <property type="component" value="Unplaced"/>
</dbReference>
<dbReference type="Proteomes" id="UP000694726">
    <property type="component" value="Unplaced"/>
</dbReference>
<dbReference type="Proteomes" id="UP000694727">
    <property type="component" value="Unplaced"/>
</dbReference>
<dbReference type="Proteomes" id="UP000694728">
    <property type="component" value="Unplaced"/>
</dbReference>
<dbReference type="GO" id="GO:0016323">
    <property type="term" value="C:basolateral plasma membrane"/>
    <property type="evidence" value="ECO:0000250"/>
    <property type="project" value="UniProtKB"/>
</dbReference>
<dbReference type="GO" id="GO:0005886">
    <property type="term" value="C:plasma membrane"/>
    <property type="evidence" value="ECO:0000250"/>
    <property type="project" value="UniProtKB"/>
</dbReference>
<dbReference type="GO" id="GO:0008528">
    <property type="term" value="F:G protein-coupled peptide receptor activity"/>
    <property type="evidence" value="ECO:0000318"/>
    <property type="project" value="GO_Central"/>
</dbReference>
<dbReference type="GO" id="GO:0044877">
    <property type="term" value="F:protein-containing complex binding"/>
    <property type="evidence" value="ECO:0000250"/>
    <property type="project" value="UniProtKB"/>
</dbReference>
<dbReference type="GO" id="GO:0038023">
    <property type="term" value="F:signaling receptor activity"/>
    <property type="evidence" value="ECO:0000250"/>
    <property type="project" value="UniProtKB"/>
</dbReference>
<dbReference type="GO" id="GO:0004996">
    <property type="term" value="F:thyroid-stimulating hormone receptor activity"/>
    <property type="evidence" value="ECO:0000250"/>
    <property type="project" value="UniProtKB"/>
</dbReference>
<dbReference type="GO" id="GO:0007189">
    <property type="term" value="P:adenylate cyclase-activating G protein-coupled receptor signaling pathway"/>
    <property type="evidence" value="ECO:0000250"/>
    <property type="project" value="UniProtKB"/>
</dbReference>
<dbReference type="GO" id="GO:0007166">
    <property type="term" value="P:cell surface receptor signaling pathway"/>
    <property type="evidence" value="ECO:0000250"/>
    <property type="project" value="UniProtKB"/>
</dbReference>
<dbReference type="GO" id="GO:1904588">
    <property type="term" value="P:cellular response to glycoprotein"/>
    <property type="evidence" value="ECO:0000250"/>
    <property type="project" value="UniProtKB"/>
</dbReference>
<dbReference type="GO" id="GO:1905229">
    <property type="term" value="P:cellular response to thyrotropin-releasing hormone"/>
    <property type="evidence" value="ECO:0000250"/>
    <property type="project" value="UniProtKB"/>
</dbReference>
<dbReference type="GO" id="GO:0009755">
    <property type="term" value="P:hormone-mediated signaling pathway"/>
    <property type="evidence" value="ECO:0000318"/>
    <property type="project" value="GO_Central"/>
</dbReference>
<dbReference type="GO" id="GO:0038194">
    <property type="term" value="P:thyroid-stimulating hormone signaling pathway"/>
    <property type="evidence" value="ECO:0000250"/>
    <property type="project" value="UniProtKB"/>
</dbReference>
<dbReference type="CDD" id="cd15964">
    <property type="entry name" value="7tmA_TSH-R"/>
    <property type="match status" value="1"/>
</dbReference>
<dbReference type="FunFam" id="1.20.1070.10:FF:000019">
    <property type="entry name" value="Lutropin-choriogonadotropic hormone receptor"/>
    <property type="match status" value="1"/>
</dbReference>
<dbReference type="FunFam" id="3.80.10.10:FF:000176">
    <property type="entry name" value="Thyrotropin receptor"/>
    <property type="match status" value="1"/>
</dbReference>
<dbReference type="Gene3D" id="1.20.1070.10">
    <property type="entry name" value="Rhodopsin 7-helix transmembrane proteins"/>
    <property type="match status" value="1"/>
</dbReference>
<dbReference type="Gene3D" id="3.80.10.10">
    <property type="entry name" value="Ribonuclease Inhibitor"/>
    <property type="match status" value="1"/>
</dbReference>
<dbReference type="InterPro" id="IPR000276">
    <property type="entry name" value="GPCR_Rhodpsn"/>
</dbReference>
<dbReference type="InterPro" id="IPR017452">
    <property type="entry name" value="GPCR_Rhodpsn_7TM"/>
</dbReference>
<dbReference type="InterPro" id="IPR002131">
    <property type="entry name" value="Gphrmn_rcpt_fam"/>
</dbReference>
<dbReference type="InterPro" id="IPR026906">
    <property type="entry name" value="LRR_5"/>
</dbReference>
<dbReference type="InterPro" id="IPR032675">
    <property type="entry name" value="LRR_dom_sf"/>
</dbReference>
<dbReference type="InterPro" id="IPR002274">
    <property type="entry name" value="TSH_rcpt"/>
</dbReference>
<dbReference type="PANTHER" id="PTHR24372">
    <property type="entry name" value="GLYCOPROTEIN HORMONE RECEPTOR"/>
    <property type="match status" value="1"/>
</dbReference>
<dbReference type="PANTHER" id="PTHR24372:SF0">
    <property type="entry name" value="THYROTROPIN RECEPTOR"/>
    <property type="match status" value="1"/>
</dbReference>
<dbReference type="Pfam" id="PF00001">
    <property type="entry name" value="7tm_1"/>
    <property type="match status" value="1"/>
</dbReference>
<dbReference type="Pfam" id="PF13306">
    <property type="entry name" value="LRR_5"/>
    <property type="match status" value="2"/>
</dbReference>
<dbReference type="PRINTS" id="PR00373">
    <property type="entry name" value="GLYCHORMONER"/>
</dbReference>
<dbReference type="PRINTS" id="PR00237">
    <property type="entry name" value="GPCRRHODOPSN"/>
</dbReference>
<dbReference type="PRINTS" id="PR01145">
    <property type="entry name" value="TSHRECEPTOR"/>
</dbReference>
<dbReference type="SUPFAM" id="SSF81321">
    <property type="entry name" value="Family A G protein-coupled receptor-like"/>
    <property type="match status" value="1"/>
</dbReference>
<dbReference type="SUPFAM" id="SSF52058">
    <property type="entry name" value="L domain-like"/>
    <property type="match status" value="1"/>
</dbReference>
<dbReference type="PROSITE" id="PS00237">
    <property type="entry name" value="G_PROTEIN_RECEP_F1_1"/>
    <property type="match status" value="1"/>
</dbReference>
<dbReference type="PROSITE" id="PS50262">
    <property type="entry name" value="G_PROTEIN_RECEP_F1_2"/>
    <property type="match status" value="1"/>
</dbReference>
<gene>
    <name type="primary">TSHR</name>
</gene>
<protein>
    <recommendedName>
        <fullName>Thyrotropin receptor</fullName>
    </recommendedName>
    <alternativeName>
        <fullName>Thyroid-stimulating hormone receptor</fullName>
        <shortName>TSH-R</shortName>
    </alternativeName>
</protein>
<evidence type="ECO:0000250" key="1">
    <source>
        <dbReference type="UniProtKB" id="P16473"/>
    </source>
</evidence>
<evidence type="ECO:0000250" key="2">
    <source>
        <dbReference type="UniProtKB" id="P21463"/>
    </source>
</evidence>
<evidence type="ECO:0000255" key="3"/>
<evidence type="ECO:0000255" key="4">
    <source>
        <dbReference type="PROSITE-ProRule" id="PRU00521"/>
    </source>
</evidence>
<evidence type="ECO:0000269" key="5">
    <source>
    </source>
</evidence>
<evidence type="ECO:0000303" key="6">
    <source ref="2"/>
</evidence>
<evidence type="ECO:0000305" key="7"/>
<accession>Q8SPP9</accession>
<accession>Q9BG55</accession>
<accession>Q9BG56</accession>
<feature type="signal peptide" evidence="3">
    <location>
        <begin position="1"/>
        <end position="21"/>
    </location>
</feature>
<feature type="chain" id="PRO_0000233347" description="Thyrotropin receptor">
    <location>
        <begin position="22"/>
        <end position="764"/>
    </location>
</feature>
<feature type="topological domain" description="Extracellular" evidence="3">
    <location>
        <begin position="22"/>
        <end position="413"/>
    </location>
</feature>
<feature type="transmembrane region" description="Helical; Name=1" evidence="3">
    <location>
        <begin position="414"/>
        <end position="441"/>
    </location>
</feature>
<feature type="topological domain" description="Cytoplasmic" evidence="3">
    <location>
        <begin position="442"/>
        <end position="450"/>
    </location>
</feature>
<feature type="transmembrane region" description="Helical; Name=2" evidence="3">
    <location>
        <begin position="451"/>
        <end position="473"/>
    </location>
</feature>
<feature type="topological domain" description="Extracellular" evidence="3">
    <location>
        <begin position="474"/>
        <end position="494"/>
    </location>
</feature>
<feature type="transmembrane region" description="Helical; Name=3" evidence="3">
    <location>
        <begin position="495"/>
        <end position="517"/>
    </location>
</feature>
<feature type="topological domain" description="Cytoplasmic" evidence="3">
    <location>
        <begin position="518"/>
        <end position="537"/>
    </location>
</feature>
<feature type="transmembrane region" description="Helical; Name=4" evidence="3">
    <location>
        <begin position="538"/>
        <end position="560"/>
    </location>
</feature>
<feature type="topological domain" description="Extracellular" evidence="3">
    <location>
        <begin position="561"/>
        <end position="580"/>
    </location>
</feature>
<feature type="transmembrane region" description="Helical; Name=5" evidence="3">
    <location>
        <begin position="581"/>
        <end position="602"/>
    </location>
</feature>
<feature type="topological domain" description="Cytoplasmic" evidence="3">
    <location>
        <begin position="603"/>
        <end position="625"/>
    </location>
</feature>
<feature type="transmembrane region" description="Helical; Name=6" evidence="3">
    <location>
        <begin position="626"/>
        <end position="649"/>
    </location>
</feature>
<feature type="topological domain" description="Extracellular" evidence="3">
    <location>
        <begin position="650"/>
        <end position="660"/>
    </location>
</feature>
<feature type="transmembrane region" description="Helical; Name=7" evidence="3">
    <location>
        <begin position="661"/>
        <end position="682"/>
    </location>
</feature>
<feature type="topological domain" description="Cytoplasmic" evidence="3">
    <location>
        <begin position="683"/>
        <end position="764"/>
    </location>
</feature>
<feature type="repeat" description="LRR 1">
    <location>
        <begin position="125"/>
        <end position="150"/>
    </location>
</feature>
<feature type="repeat" description="LRR 2">
    <location>
        <begin position="151"/>
        <end position="174"/>
    </location>
</feature>
<feature type="repeat" description="LRR 3">
    <location>
        <begin position="176"/>
        <end position="199"/>
    </location>
</feature>
<feature type="repeat" description="LRR 4">
    <location>
        <begin position="201"/>
        <end position="223"/>
    </location>
</feature>
<feature type="repeat" description="LRR 5">
    <location>
        <begin position="225"/>
        <end position="248"/>
    </location>
</feature>
<feature type="repeat" description="LRR 6">
    <location>
        <begin position="250"/>
        <end position="271"/>
    </location>
</feature>
<feature type="short sequence motif" description="PDZ-binding">
    <location>
        <begin position="762"/>
        <end position="764"/>
    </location>
</feature>
<feature type="modified residue" description="Sulfotyrosine" evidence="1">
    <location>
        <position position="385"/>
    </location>
</feature>
<feature type="glycosylation site" description="N-linked (GlcNAc...) asparagine" evidence="3">
    <location>
        <position position="77"/>
    </location>
</feature>
<feature type="glycosylation site" description="N-linked (GlcNAc...) asparagine" evidence="3">
    <location>
        <position position="99"/>
    </location>
</feature>
<feature type="glycosylation site" description="N-linked (GlcNAc...) asparagine" evidence="3">
    <location>
        <position position="177"/>
    </location>
</feature>
<feature type="glycosylation site" description="N-linked (GlcNAc...) asparagine" evidence="3">
    <location>
        <position position="198"/>
    </location>
</feature>
<feature type="glycosylation site" description="N-linked (GlcNAc...) asparagine" evidence="3">
    <location>
        <position position="302"/>
    </location>
</feature>
<feature type="disulfide bond" evidence="4">
    <location>
        <begin position="31"/>
        <end position="41"/>
    </location>
</feature>
<feature type="disulfide bond" evidence="4">
    <location>
        <begin position="494"/>
        <end position="569"/>
    </location>
</feature>
<feature type="splice variant" id="VSP_018131" description="In isoform 2." evidence="6">
    <location>
        <begin position="107"/>
        <end position="131"/>
    </location>
</feature>
<feature type="sequence conflict" description="In Ref. 2; AAK08511." evidence="7" ref="2">
    <original>F</original>
    <variation>L</variation>
    <location>
        <position position="154"/>
    </location>
</feature>
<feature type="sequence conflict" description="In Ref. 1; AAL92560." evidence="7" ref="1">
    <original>P</original>
    <variation>T</variation>
    <location>
        <position position="762"/>
    </location>
</feature>
<organism>
    <name type="scientific">Sus scrofa</name>
    <name type="common">Pig</name>
    <dbReference type="NCBI Taxonomy" id="9823"/>
    <lineage>
        <taxon>Eukaryota</taxon>
        <taxon>Metazoa</taxon>
        <taxon>Chordata</taxon>
        <taxon>Craniata</taxon>
        <taxon>Vertebrata</taxon>
        <taxon>Euteleostomi</taxon>
        <taxon>Mammalia</taxon>
        <taxon>Eutheria</taxon>
        <taxon>Laurasiatheria</taxon>
        <taxon>Artiodactyla</taxon>
        <taxon>Suina</taxon>
        <taxon>Suidae</taxon>
        <taxon>Sus</taxon>
    </lineage>
</organism>